<keyword id="KW-0002">3D-structure</keyword>
<keyword id="KW-0007">Acetylation</keyword>
<keyword id="KW-0963">Cytoplasm</keyword>
<keyword id="KW-0903">Direct protein sequencing</keyword>
<keyword id="KW-0251">Elongation factor</keyword>
<keyword id="KW-0342">GTP-binding</keyword>
<keyword id="KW-0378">Hydrolase</keyword>
<keyword id="KW-1017">Isopeptide bond</keyword>
<keyword id="KW-0488">Methylation</keyword>
<keyword id="KW-0547">Nucleotide-binding</keyword>
<keyword id="KW-0539">Nucleus</keyword>
<keyword id="KW-0597">Phosphoprotein</keyword>
<keyword id="KW-0648">Protein biosynthesis</keyword>
<keyword id="KW-1185">Reference proteome</keyword>
<keyword id="KW-0832">Ubl conjugation</keyword>
<reference key="1">
    <citation type="journal article" date="2005" name="Science">
        <title>The transcriptional landscape of the mammalian genome.</title>
        <authorList>
            <person name="Carninci P."/>
            <person name="Kasukawa T."/>
            <person name="Katayama S."/>
            <person name="Gough J."/>
            <person name="Frith M.C."/>
            <person name="Maeda N."/>
            <person name="Oyama R."/>
            <person name="Ravasi T."/>
            <person name="Lenhard B."/>
            <person name="Wells C."/>
            <person name="Kodzius R."/>
            <person name="Shimokawa K."/>
            <person name="Bajic V.B."/>
            <person name="Brenner S.E."/>
            <person name="Batalov S."/>
            <person name="Forrest A.R."/>
            <person name="Zavolan M."/>
            <person name="Davis M.J."/>
            <person name="Wilming L.G."/>
            <person name="Aidinis V."/>
            <person name="Allen J.E."/>
            <person name="Ambesi-Impiombato A."/>
            <person name="Apweiler R."/>
            <person name="Aturaliya R.N."/>
            <person name="Bailey T.L."/>
            <person name="Bansal M."/>
            <person name="Baxter L."/>
            <person name="Beisel K.W."/>
            <person name="Bersano T."/>
            <person name="Bono H."/>
            <person name="Chalk A.M."/>
            <person name="Chiu K.P."/>
            <person name="Choudhary V."/>
            <person name="Christoffels A."/>
            <person name="Clutterbuck D.R."/>
            <person name="Crowe M.L."/>
            <person name="Dalla E."/>
            <person name="Dalrymple B.P."/>
            <person name="de Bono B."/>
            <person name="Della Gatta G."/>
            <person name="di Bernardo D."/>
            <person name="Down T."/>
            <person name="Engstrom P."/>
            <person name="Fagiolini M."/>
            <person name="Faulkner G."/>
            <person name="Fletcher C.F."/>
            <person name="Fukushima T."/>
            <person name="Furuno M."/>
            <person name="Futaki S."/>
            <person name="Gariboldi M."/>
            <person name="Georgii-Hemming P."/>
            <person name="Gingeras T.R."/>
            <person name="Gojobori T."/>
            <person name="Green R.E."/>
            <person name="Gustincich S."/>
            <person name="Harbers M."/>
            <person name="Hayashi Y."/>
            <person name="Hensch T.K."/>
            <person name="Hirokawa N."/>
            <person name="Hill D."/>
            <person name="Huminiecki L."/>
            <person name="Iacono M."/>
            <person name="Ikeo K."/>
            <person name="Iwama A."/>
            <person name="Ishikawa T."/>
            <person name="Jakt M."/>
            <person name="Kanapin A."/>
            <person name="Katoh M."/>
            <person name="Kawasawa Y."/>
            <person name="Kelso J."/>
            <person name="Kitamura H."/>
            <person name="Kitano H."/>
            <person name="Kollias G."/>
            <person name="Krishnan S.P."/>
            <person name="Kruger A."/>
            <person name="Kummerfeld S.K."/>
            <person name="Kurochkin I.V."/>
            <person name="Lareau L.F."/>
            <person name="Lazarevic D."/>
            <person name="Lipovich L."/>
            <person name="Liu J."/>
            <person name="Liuni S."/>
            <person name="McWilliam S."/>
            <person name="Madan Babu M."/>
            <person name="Madera M."/>
            <person name="Marchionni L."/>
            <person name="Matsuda H."/>
            <person name="Matsuzawa S."/>
            <person name="Miki H."/>
            <person name="Mignone F."/>
            <person name="Miyake S."/>
            <person name="Morris K."/>
            <person name="Mottagui-Tabar S."/>
            <person name="Mulder N."/>
            <person name="Nakano N."/>
            <person name="Nakauchi H."/>
            <person name="Ng P."/>
            <person name="Nilsson R."/>
            <person name="Nishiguchi S."/>
            <person name="Nishikawa S."/>
            <person name="Nori F."/>
            <person name="Ohara O."/>
            <person name="Okazaki Y."/>
            <person name="Orlando V."/>
            <person name="Pang K.C."/>
            <person name="Pavan W.J."/>
            <person name="Pavesi G."/>
            <person name="Pesole G."/>
            <person name="Petrovsky N."/>
            <person name="Piazza S."/>
            <person name="Reed J."/>
            <person name="Reid J.F."/>
            <person name="Ring B.Z."/>
            <person name="Ringwald M."/>
            <person name="Rost B."/>
            <person name="Ruan Y."/>
            <person name="Salzberg S.L."/>
            <person name="Sandelin A."/>
            <person name="Schneider C."/>
            <person name="Schoenbach C."/>
            <person name="Sekiguchi K."/>
            <person name="Semple C.A."/>
            <person name="Seno S."/>
            <person name="Sessa L."/>
            <person name="Sheng Y."/>
            <person name="Shibata Y."/>
            <person name="Shimada H."/>
            <person name="Shimada K."/>
            <person name="Silva D."/>
            <person name="Sinclair B."/>
            <person name="Sperling S."/>
            <person name="Stupka E."/>
            <person name="Sugiura K."/>
            <person name="Sultana R."/>
            <person name="Takenaka Y."/>
            <person name="Taki K."/>
            <person name="Tammoja K."/>
            <person name="Tan S.L."/>
            <person name="Tang S."/>
            <person name="Taylor M.S."/>
            <person name="Tegner J."/>
            <person name="Teichmann S.A."/>
            <person name="Ueda H.R."/>
            <person name="van Nimwegen E."/>
            <person name="Verardo R."/>
            <person name="Wei C.L."/>
            <person name="Yagi K."/>
            <person name="Yamanishi H."/>
            <person name="Zabarovsky E."/>
            <person name="Zhu S."/>
            <person name="Zimmer A."/>
            <person name="Hide W."/>
            <person name="Bult C."/>
            <person name="Grimmond S.M."/>
            <person name="Teasdale R.D."/>
            <person name="Liu E.T."/>
            <person name="Brusic V."/>
            <person name="Quackenbush J."/>
            <person name="Wahlestedt C."/>
            <person name="Mattick J.S."/>
            <person name="Hume D.A."/>
            <person name="Kai C."/>
            <person name="Sasaki D."/>
            <person name="Tomaru Y."/>
            <person name="Fukuda S."/>
            <person name="Kanamori-Katayama M."/>
            <person name="Suzuki M."/>
            <person name="Aoki J."/>
            <person name="Arakawa T."/>
            <person name="Iida J."/>
            <person name="Imamura K."/>
            <person name="Itoh M."/>
            <person name="Kato T."/>
            <person name="Kawaji H."/>
            <person name="Kawagashira N."/>
            <person name="Kawashima T."/>
            <person name="Kojima M."/>
            <person name="Kondo S."/>
            <person name="Konno H."/>
            <person name="Nakano K."/>
            <person name="Ninomiya N."/>
            <person name="Nishio T."/>
            <person name="Okada M."/>
            <person name="Plessy C."/>
            <person name="Shibata K."/>
            <person name="Shiraki T."/>
            <person name="Suzuki S."/>
            <person name="Tagami M."/>
            <person name="Waki K."/>
            <person name="Watahiki A."/>
            <person name="Okamura-Oho Y."/>
            <person name="Suzuki H."/>
            <person name="Kawai J."/>
            <person name="Hayashizaki Y."/>
        </authorList>
    </citation>
    <scope>NUCLEOTIDE SEQUENCE [LARGE SCALE MRNA]</scope>
    <source>
        <strain>C57BL/6J</strain>
        <strain>NOD</strain>
        <tissue>Bone marrow</tissue>
        <tissue>Forelimb</tissue>
        <tissue>Kidney</tissue>
        <tissue>Liver</tissue>
        <tissue>Mammary gland</tissue>
        <tissue>Thymus</tissue>
    </source>
</reference>
<reference key="2">
    <citation type="journal article" date="2004" name="Genome Res.">
        <title>The status, quality, and expansion of the NIH full-length cDNA project: the Mammalian Gene Collection (MGC).</title>
        <authorList>
            <consortium name="The MGC Project Team"/>
        </authorList>
    </citation>
    <scope>NUCLEOTIDE SEQUENCE [LARGE SCALE MRNA]</scope>
</reference>
<reference key="3">
    <citation type="submission" date="2008-02" db="UniProtKB">
        <authorList>
            <person name="Bienvenut W.V."/>
            <person name="Serrels B."/>
            <person name="Brunton V.G."/>
            <person name="Frame M.C."/>
        </authorList>
    </citation>
    <scope>PROTEIN SEQUENCE OF 2-10 AND 499-506</scope>
    <scope>CLEAVAGE OF INITIATOR METHIONINE</scope>
    <scope>IDENTIFICATION BY MASS SPECTROMETRY</scope>
    <source>
        <tissue>Embryonic fibroblast</tissue>
    </source>
</reference>
<reference key="4">
    <citation type="submission" date="2009-01" db="UniProtKB">
        <authorList>
            <person name="Lubec G."/>
            <person name="Klug S."/>
            <person name="Sunyer B."/>
            <person name="Chen W.-Q."/>
        </authorList>
    </citation>
    <scope>PROTEIN SEQUENCE OF 2-10; 33-50; 163-180; 240-249; 288-308; 416-426; 581-594; 606-625; 668-688; 717-726; 728-739; 768-801 AND 846-858</scope>
    <scope>IDENTIFICATION BY MASS SPECTROMETRY</scope>
    <source>
        <strain>OF1</strain>
        <tissue>Hippocampus</tissue>
    </source>
</reference>
<reference key="5">
    <citation type="journal article" date="2005" name="Biochem. Biophys. Res. Commun.">
        <title>Proteomic identification of proteins conjugated to ISG15 in mouse and human cells.</title>
        <authorList>
            <person name="Giannakopoulos N.V."/>
            <person name="Luo J.K."/>
            <person name="Papov V."/>
            <person name="Zou W."/>
            <person name="Lenschow D.J."/>
            <person name="Jacobs B.S."/>
            <person name="Borden E.C."/>
            <person name="Li J."/>
            <person name="Virgin H.W."/>
            <person name="Zhang D.E."/>
        </authorList>
    </citation>
    <scope>ISGYLATION</scope>
</reference>
<reference key="6">
    <citation type="journal article" date="2010" name="Cell">
        <title>A tissue-specific atlas of mouse protein phosphorylation and expression.</title>
        <authorList>
            <person name="Huttlin E.L."/>
            <person name="Jedrychowski M.P."/>
            <person name="Elias J.E."/>
            <person name="Goswami T."/>
            <person name="Rad R."/>
            <person name="Beausoleil S.A."/>
            <person name="Villen J."/>
            <person name="Haas W."/>
            <person name="Sowa M.E."/>
            <person name="Gygi S.P."/>
        </authorList>
    </citation>
    <scope>IDENTIFICATION BY MASS SPECTROMETRY [LARGE SCALE ANALYSIS]</scope>
    <source>
        <tissue>Brain</tissue>
        <tissue>Brown adipose tissue</tissue>
        <tissue>Heart</tissue>
        <tissue>Kidney</tissue>
        <tissue>Liver</tissue>
        <tissue>Lung</tissue>
        <tissue>Pancreas</tissue>
        <tissue>Spleen</tissue>
        <tissue>Testis</tissue>
    </source>
</reference>
<reference key="7">
    <citation type="journal article" date="2013" name="Mol. Cell">
        <title>SIRT5-mediated lysine desuccinylation impacts diverse metabolic pathways.</title>
        <authorList>
            <person name="Park J."/>
            <person name="Chen Y."/>
            <person name="Tishkoff D.X."/>
            <person name="Peng C."/>
            <person name="Tan M."/>
            <person name="Dai L."/>
            <person name="Xie Z."/>
            <person name="Zhang Y."/>
            <person name="Zwaans B.M."/>
            <person name="Skinner M.E."/>
            <person name="Lombard D.B."/>
            <person name="Zhao Y."/>
        </authorList>
    </citation>
    <scope>ACETYLATION [LARGE SCALE ANALYSIS] AT LYS-239; LYS-272; LYS-275; LYS-439; LYS-445 AND LYS-619</scope>
    <scope>SUCCINYLATION [LARGE SCALE ANALYSIS] AT LYS-152; LYS-272 AND LYS-572</scope>
    <scope>IDENTIFICATION BY MASS SPECTROMETRY [LARGE SCALE ANALYSIS]</scope>
    <source>
        <tissue>Embryonic fibroblast</tissue>
    </source>
</reference>
<reference evidence="10 11" key="8">
    <citation type="journal article" date="2021" name="Nat. Commun.">
        <title>Functionally distinct roles for eEF2K in the control of ribosome availability and p-body abundance.</title>
        <authorList>
            <person name="Smith P.R."/>
            <person name="Loerch S."/>
            <person name="Kunder N."/>
            <person name="Stanowick A.D."/>
            <person name="Lou T.F."/>
            <person name="Campbell Z.T."/>
        </authorList>
    </citation>
    <scope>STRUCTURE BY ELECTRON MICROSCOPY (3.10 ANGSTROMS) IN COMPLEX WITH RIBOSOME AND SERBP1</scope>
    <scope>INTERACTION WITH SERBP1</scope>
    <scope>PHOSPHORYLATION AT THR-57</scope>
</reference>
<protein>
    <recommendedName>
        <fullName>Elongation factor 2</fullName>
        <shortName>EF-2</shortName>
        <ecNumber evidence="2">3.6.5.-</ecNumber>
    </recommendedName>
</protein>
<comment type="function">
    <text evidence="2">Catalyzes the GTP-dependent ribosomal translocation step during translation elongation. During this step, the ribosome changes from the pre-translocational (PRE) to the post-translocational (POST) state as the newly formed A-site-bound peptidyl-tRNA and P-site-bound deacylated tRNA move to the P and E sites, respectively. Catalyzes the coordinated movement of the two tRNA molecules, the mRNA and conformational changes in the ribosome.</text>
</comment>
<comment type="catalytic activity">
    <reaction evidence="2">
        <text>GTP + H2O = GDP + phosphate + H(+)</text>
        <dbReference type="Rhea" id="RHEA:19669"/>
        <dbReference type="ChEBI" id="CHEBI:15377"/>
        <dbReference type="ChEBI" id="CHEBI:15378"/>
        <dbReference type="ChEBI" id="CHEBI:37565"/>
        <dbReference type="ChEBI" id="CHEBI:43474"/>
        <dbReference type="ChEBI" id="CHEBI:58189"/>
    </reaction>
    <physiologicalReaction direction="left-to-right" evidence="2">
        <dbReference type="Rhea" id="RHEA:19670"/>
    </physiologicalReaction>
</comment>
<comment type="subunit">
    <text evidence="2 4 7">Binds to 80S ribosomes (PubMed:34815424). Actively translating ribosomes show mutually exclusive binding of eIF5a (EIF5A or EIF5A2) and EEF2/eEF2 (By similarity). Interacts with SERBP1; interaction sequesters EEF2/eEF2 at the A-site of the ribosome, thereby blocking the interaction sites of the mRNA-tRNA complex, promoting ribosome stabilization and hibernation (PubMed:34815424). Interacts with HABP4; interaction takes place at the A-site of hibernating ribosomes and promotes ribosome stabilization (By similarity). Component of the mRNA surveillance SURF complex, at least composed of ERF1, ERF3 (ERF3A or ERF3B), EEF2, UPF1/RENT1, SMG1, SMG8 and SMG9. Interacts with RBPMS2 (By similarity).</text>
</comment>
<comment type="subcellular location">
    <subcellularLocation>
        <location evidence="2">Cytoplasm</location>
    </subcellularLocation>
    <subcellularLocation>
        <location evidence="2">Nucleus</location>
    </subcellularLocation>
    <text evidence="2">Phosphorylation by CSK promotes cleavage and SUMOylation-dependent nuclear translocation of the C-terminal cleavage product.</text>
</comment>
<comment type="PTM">
    <text evidence="2 7">Phosphorylation by EF-2 kinase completely inactivates EF-2; it requires prior phosphorylation by CDK2 at Ser-595 during mitotic prometaphase (PubMed:34815424). Phosphorylation by CSK promotes SUMOylation, proteolytic cleavage, and nuclear translocation if the C-terminal fragment (By similarity).</text>
</comment>
<comment type="PTM">
    <text evidence="1">Diphthamide is 2-[3-carboxyamido-3-(trimethyl-ammonio)propyl]histidine (By similarity).</text>
</comment>
<comment type="PTM">
    <text evidence="6">ISGylated.</text>
</comment>
<comment type="PTM">
    <text evidence="2">Proteolytically processed at two sites following phosphorylation by CSK.</text>
</comment>
<comment type="PTM">
    <text evidence="2">SUMOylated following phosphorylation by CSK, promotes proteolytic cleavage.</text>
</comment>
<comment type="similarity">
    <text evidence="5">Belongs to the TRAFAC class translation factor GTPase superfamily. Classic translation factor GTPase family. EF-G/EF-2 subfamily.</text>
</comment>
<sequence length="858" mass="95314">MVNFTVDQIRAIMDKKANIRNMSVIAHVDHGKSTLTDSLVCKAGIIASARAGETRFTDTRKDEQERCITIKSTAISLFYELSENDLNFIKQSKDGSGFLINLIDSPGHVDFSSEVTAALRVTDGALVVVDCVSGVCVQTETVLRQAIAERIKPVLMMNKMDRALLELQLEPEELYQTFQRIVENVNVIISTYGEGESGPMGNIMIDPVLGTVGFGSGLHGWAFTLKQFAEMYVAKFAAKGEGQLSAAERAKKVEDMMKKLWGDRYFDPANGKFSKSANSPDGKKLPRTFCQLILDPIFKVFDAIMNFRKEETAKLIEKLDIKLDSEDKDKEGKPLLKAVMRRWLPAGDALLQMITIHLPSPVTAQKYRCELLYEGPPDDEAAMGIKSCDPKGPLMMYISKMVPTSDKGRFYAFGRVFSGVVSTGLKVRIMGPNYTPGKKEDLYLKPIQRTILMMGRYVEPIEDVPCGNIVGLVGVDQFLVKTGTITTFEHAHNMRVMKFSVSPVVRVAVEAKNPADLPKLVEGLKRLAKSDPMVQCIIEESGEHIIAGAGELHLEICLKDLEEDHACIPIKKSDPVVSYRETVSEESNVLCLSKSPNKHNRLYMKARPFPDGLAEDIDKGEVSARQELKARARYLAEKYEWDVAEARKIWCFGPDGTGPNILTDITKGVQYLNEIKDSVVAGFQWATKEGALCEENMRGVRFDVHDVTLHADAIHRGGGQIIPTARRCLYASVLTAQPRLMEPIYLVEIQCPEQVVGGIYGVLNRKRGHVFEESQVAGTPMFVVKAYLPVNESFGFTADLRSNTGGQAFPQCVFDHWQILPGDPFDNSSRPSQVVAETRKRKGLKEGIPALDNFLDKL</sequence>
<feature type="initiator methionine" description="Removed" evidence="8 9">
    <location>
        <position position="1"/>
    </location>
</feature>
<feature type="chain" id="PRO_0000091002" description="Elongation factor 2">
    <location>
        <begin position="2"/>
        <end position="858"/>
    </location>
</feature>
<feature type="domain" description="tr-type G" evidence="5">
    <location>
        <begin position="17"/>
        <end position="362"/>
    </location>
</feature>
<feature type="binding site" evidence="3">
    <location>
        <begin position="26"/>
        <end position="33"/>
    </location>
    <ligand>
        <name>GTP</name>
        <dbReference type="ChEBI" id="CHEBI:37565"/>
    </ligand>
</feature>
<feature type="binding site" evidence="3">
    <location>
        <begin position="158"/>
        <end position="161"/>
    </location>
    <ligand>
        <name>GTP</name>
        <dbReference type="ChEBI" id="CHEBI:37565"/>
    </ligand>
</feature>
<feature type="binding site" evidence="3">
    <location>
        <begin position="216"/>
        <end position="218"/>
    </location>
    <ligand>
        <name>GTP</name>
        <dbReference type="ChEBI" id="CHEBI:37565"/>
    </ligand>
</feature>
<feature type="modified residue" description="Phosphothreonine" evidence="2">
    <location>
        <position position="54"/>
    </location>
</feature>
<feature type="modified residue" description="Phosphothreonine; by EEF2K" evidence="7">
    <location>
        <position position="57"/>
    </location>
</feature>
<feature type="modified residue" description="Phosphothreonine" evidence="2">
    <location>
        <position position="59"/>
    </location>
</feature>
<feature type="modified residue" description="N6-succinyllysine" evidence="12">
    <location>
        <position position="152"/>
    </location>
</feature>
<feature type="modified residue" description="N6-acetyllysine" evidence="2">
    <location>
        <position position="235"/>
    </location>
</feature>
<feature type="modified residue" description="N6-acetyllysine; alternate" evidence="12">
    <location>
        <position position="239"/>
    </location>
</feature>
<feature type="modified residue" description="Phosphotyrosine; by CSK" evidence="2">
    <location>
        <position position="265"/>
    </location>
</feature>
<feature type="modified residue" description="N6-acetyllysine; alternate" evidence="12">
    <location>
        <position position="272"/>
    </location>
</feature>
<feature type="modified residue" description="N6-succinyllysine; alternate" evidence="12">
    <location>
        <position position="272"/>
    </location>
</feature>
<feature type="modified residue" description="N6-acetyllysine" evidence="12">
    <location>
        <position position="275"/>
    </location>
</feature>
<feature type="modified residue" description="Phosphoserine" evidence="1">
    <location>
        <position position="325"/>
    </location>
</feature>
<feature type="modified residue" description="Phosphotyrosine; by CSK" evidence="2">
    <location>
        <position position="373"/>
    </location>
</feature>
<feature type="modified residue" description="Phosphothreonine" evidence="2">
    <location>
        <position position="435"/>
    </location>
</feature>
<feature type="modified residue" description="N6-acetyllysine" evidence="12">
    <location>
        <position position="439"/>
    </location>
</feature>
<feature type="modified residue" description="N6-acetyllysine" evidence="12">
    <location>
        <position position="445"/>
    </location>
</feature>
<feature type="modified residue" description="Phosphoserine" evidence="2">
    <location>
        <position position="502"/>
    </location>
</feature>
<feature type="modified residue" description="N6,N6,N6-trimethyllysine; by EEF2KMT" evidence="2">
    <location>
        <position position="525"/>
    </location>
</feature>
<feature type="modified residue" description="N6-succinyllysine" evidence="12">
    <location>
        <position position="572"/>
    </location>
</feature>
<feature type="modified residue" description="Phosphoserine; by CDK2" evidence="2">
    <location>
        <position position="595"/>
    </location>
</feature>
<feature type="modified residue" description="N6-acetyllysine" evidence="12">
    <location>
        <position position="619"/>
    </location>
</feature>
<feature type="modified residue" description="Diphthamide" evidence="1">
    <location>
        <position position="715"/>
    </location>
</feature>
<feature type="cross-link" description="Glycyl lysine isopeptide (Lys-Gly) (interchain with G-Cter in SUMO1); alternate" evidence="2">
    <location>
        <position position="239"/>
    </location>
</feature>
<feature type="cross-link" description="Glycyl lysine isopeptide (Lys-Gly) (interchain with G-Cter in SUMO)" evidence="2">
    <location>
        <position position="322"/>
    </location>
</feature>
<feature type="cross-link" description="Glycyl lysine isopeptide (Lys-Gly) (interchain with G-Cter in SUMO)" evidence="2">
    <location>
        <position position="529"/>
    </location>
</feature>
<name>EF2_MOUSE</name>
<evidence type="ECO:0000250" key="1">
    <source>
        <dbReference type="UniProtKB" id="P05197"/>
    </source>
</evidence>
<evidence type="ECO:0000250" key="2">
    <source>
        <dbReference type="UniProtKB" id="P13639"/>
    </source>
</evidence>
<evidence type="ECO:0000250" key="3">
    <source>
        <dbReference type="UniProtKB" id="P32324"/>
    </source>
</evidence>
<evidence type="ECO:0000250" key="4">
    <source>
        <dbReference type="UniProtKB" id="Q7ZXP8"/>
    </source>
</evidence>
<evidence type="ECO:0000255" key="5">
    <source>
        <dbReference type="PROSITE-ProRule" id="PRU01059"/>
    </source>
</evidence>
<evidence type="ECO:0000269" key="6">
    <source>
    </source>
</evidence>
<evidence type="ECO:0000269" key="7">
    <source>
    </source>
</evidence>
<evidence type="ECO:0000269" key="8">
    <source ref="3"/>
</evidence>
<evidence type="ECO:0000269" key="9">
    <source ref="4"/>
</evidence>
<evidence type="ECO:0007744" key="10">
    <source>
        <dbReference type="PDB" id="7LS1"/>
    </source>
</evidence>
<evidence type="ECO:0007744" key="11">
    <source>
        <dbReference type="PDB" id="7LS2"/>
    </source>
</evidence>
<evidence type="ECO:0007744" key="12">
    <source>
    </source>
</evidence>
<gene>
    <name type="primary">Eef2</name>
</gene>
<proteinExistence type="evidence at protein level"/>
<organism>
    <name type="scientific">Mus musculus</name>
    <name type="common">Mouse</name>
    <dbReference type="NCBI Taxonomy" id="10090"/>
    <lineage>
        <taxon>Eukaryota</taxon>
        <taxon>Metazoa</taxon>
        <taxon>Chordata</taxon>
        <taxon>Craniata</taxon>
        <taxon>Vertebrata</taxon>
        <taxon>Euteleostomi</taxon>
        <taxon>Mammalia</taxon>
        <taxon>Eutheria</taxon>
        <taxon>Euarchontoglires</taxon>
        <taxon>Glires</taxon>
        <taxon>Rodentia</taxon>
        <taxon>Myomorpha</taxon>
        <taxon>Muroidea</taxon>
        <taxon>Muridae</taxon>
        <taxon>Murinae</taxon>
        <taxon>Mus</taxon>
        <taxon>Mus</taxon>
    </lineage>
</organism>
<dbReference type="EC" id="3.6.5.-" evidence="2"/>
<dbReference type="EMBL" id="AK040474">
    <property type="protein sequence ID" value="BAC30601.1"/>
    <property type="molecule type" value="mRNA"/>
</dbReference>
<dbReference type="EMBL" id="AK077866">
    <property type="protein sequence ID" value="BAC37041.1"/>
    <property type="molecule type" value="mRNA"/>
</dbReference>
<dbReference type="EMBL" id="AK087985">
    <property type="protein sequence ID" value="BAC40076.1"/>
    <property type="molecule type" value="mRNA"/>
</dbReference>
<dbReference type="EMBL" id="AK145545">
    <property type="protein sequence ID" value="BAE26498.1"/>
    <property type="molecule type" value="mRNA"/>
</dbReference>
<dbReference type="EMBL" id="AK146947">
    <property type="protein sequence ID" value="BAE27556.1"/>
    <property type="molecule type" value="mRNA"/>
</dbReference>
<dbReference type="EMBL" id="AK151487">
    <property type="protein sequence ID" value="BAE30440.1"/>
    <property type="molecule type" value="mRNA"/>
</dbReference>
<dbReference type="EMBL" id="AK151812">
    <property type="protein sequence ID" value="BAE30710.1"/>
    <property type="molecule type" value="mRNA"/>
</dbReference>
<dbReference type="EMBL" id="AK151945">
    <property type="protein sequence ID" value="BAE30820.1"/>
    <property type="molecule type" value="mRNA"/>
</dbReference>
<dbReference type="EMBL" id="AK152146">
    <property type="protein sequence ID" value="BAE30983.1"/>
    <property type="molecule type" value="mRNA"/>
</dbReference>
<dbReference type="EMBL" id="AK152447">
    <property type="protein sequence ID" value="BAE31226.1"/>
    <property type="molecule type" value="mRNA"/>
</dbReference>
<dbReference type="EMBL" id="AK152587">
    <property type="protein sequence ID" value="BAE31336.1"/>
    <property type="molecule type" value="mRNA"/>
</dbReference>
<dbReference type="EMBL" id="AK152826">
    <property type="protein sequence ID" value="BAE31527.1"/>
    <property type="molecule type" value="mRNA"/>
</dbReference>
<dbReference type="EMBL" id="AK153275">
    <property type="protein sequence ID" value="BAE31861.1"/>
    <property type="molecule type" value="mRNA"/>
</dbReference>
<dbReference type="EMBL" id="AK155325">
    <property type="protein sequence ID" value="BAE33192.1"/>
    <property type="molecule type" value="mRNA"/>
</dbReference>
<dbReference type="EMBL" id="AK159806">
    <property type="protein sequence ID" value="BAE35386.1"/>
    <property type="molecule type" value="mRNA"/>
</dbReference>
<dbReference type="EMBL" id="AK163063">
    <property type="protein sequence ID" value="BAE37177.1"/>
    <property type="molecule type" value="mRNA"/>
</dbReference>
<dbReference type="EMBL" id="AK166212">
    <property type="protein sequence ID" value="BAE38631.1"/>
    <property type="molecule type" value="mRNA"/>
</dbReference>
<dbReference type="EMBL" id="AK166596">
    <property type="protein sequence ID" value="BAE38882.1"/>
    <property type="molecule type" value="mRNA"/>
</dbReference>
<dbReference type="EMBL" id="AK166747">
    <property type="protein sequence ID" value="BAE38989.1"/>
    <property type="molecule type" value="mRNA"/>
</dbReference>
<dbReference type="EMBL" id="AK166751">
    <property type="protein sequence ID" value="BAE38992.1"/>
    <property type="molecule type" value="mRNA"/>
</dbReference>
<dbReference type="EMBL" id="AK166851">
    <property type="protein sequence ID" value="BAE39070.1"/>
    <property type="molecule type" value="mRNA"/>
</dbReference>
<dbReference type="EMBL" id="AK166968">
    <property type="protein sequence ID" value="BAE39151.1"/>
    <property type="molecule type" value="mRNA"/>
</dbReference>
<dbReference type="EMBL" id="AK167093">
    <property type="protein sequence ID" value="BAE39249.1"/>
    <property type="molecule type" value="mRNA"/>
</dbReference>
<dbReference type="EMBL" id="AK167109">
    <property type="protein sequence ID" value="BAE39257.1"/>
    <property type="molecule type" value="mRNA"/>
</dbReference>
<dbReference type="EMBL" id="AK167115">
    <property type="protein sequence ID" value="BAE39263.1"/>
    <property type="molecule type" value="mRNA"/>
</dbReference>
<dbReference type="EMBL" id="AK167221">
    <property type="protein sequence ID" value="BAE39346.1"/>
    <property type="molecule type" value="mRNA"/>
</dbReference>
<dbReference type="EMBL" id="AK168794">
    <property type="protein sequence ID" value="BAE40627.1"/>
    <property type="molecule type" value="mRNA"/>
</dbReference>
<dbReference type="EMBL" id="AK168827">
    <property type="protein sequence ID" value="BAE40654.1"/>
    <property type="molecule type" value="mRNA"/>
</dbReference>
<dbReference type="EMBL" id="AK168874">
    <property type="protein sequence ID" value="BAE40692.1"/>
    <property type="molecule type" value="mRNA"/>
</dbReference>
<dbReference type="EMBL" id="AK169013">
    <property type="protein sequence ID" value="BAE40810.1"/>
    <property type="molecule type" value="mRNA"/>
</dbReference>
<dbReference type="EMBL" id="BC007152">
    <property type="protein sequence ID" value="AAH07152.1"/>
    <property type="molecule type" value="mRNA"/>
</dbReference>
<dbReference type="CCDS" id="CCDS35993.1"/>
<dbReference type="RefSeq" id="NP_031933.1">
    <property type="nucleotide sequence ID" value="NM_007907.3"/>
</dbReference>
<dbReference type="PDB" id="7LS1">
    <property type="method" value="EM"/>
    <property type="resolution" value="3.30 A"/>
    <property type="chains" value="m=1-858"/>
</dbReference>
<dbReference type="PDB" id="7LS2">
    <property type="method" value="EM"/>
    <property type="resolution" value="3.10 A"/>
    <property type="chains" value="m=1-858"/>
</dbReference>
<dbReference type="PDBsum" id="7LS1"/>
<dbReference type="PDBsum" id="7LS2"/>
<dbReference type="EMDB" id="EMD-23500"/>
<dbReference type="EMDB" id="EMD-23501"/>
<dbReference type="SMR" id="P58252"/>
<dbReference type="BioGRID" id="199387">
    <property type="interactions" value="105"/>
</dbReference>
<dbReference type="FunCoup" id="P58252">
    <property type="interactions" value="2403"/>
</dbReference>
<dbReference type="IntAct" id="P58252">
    <property type="interactions" value="17"/>
</dbReference>
<dbReference type="MINT" id="P58252"/>
<dbReference type="STRING" id="10090.ENSMUSP00000046101"/>
<dbReference type="GlyGen" id="P58252">
    <property type="glycosylation" value="3 sites, 2 N-linked glycans (2 sites), 1 O-linked glycan (1 site)"/>
</dbReference>
<dbReference type="iPTMnet" id="P58252"/>
<dbReference type="MetOSite" id="P58252"/>
<dbReference type="PhosphoSitePlus" id="P58252"/>
<dbReference type="SwissPalm" id="P58252"/>
<dbReference type="REPRODUCTION-2DPAGE" id="P58252"/>
<dbReference type="CPTAC" id="non-CPTAC-3912"/>
<dbReference type="jPOST" id="P58252"/>
<dbReference type="PaxDb" id="10090-ENSMUSP00000046101"/>
<dbReference type="PeptideAtlas" id="P58252"/>
<dbReference type="ProteomicsDB" id="277547"/>
<dbReference type="Pumba" id="P58252"/>
<dbReference type="Antibodypedia" id="23430">
    <property type="antibodies" value="585 antibodies from 39 providers"/>
</dbReference>
<dbReference type="DNASU" id="13629"/>
<dbReference type="Ensembl" id="ENSMUST00000047864.11">
    <property type="protein sequence ID" value="ENSMUSP00000046101.10"/>
    <property type="gene ID" value="ENSMUSG00000034994.11"/>
</dbReference>
<dbReference type="GeneID" id="13629"/>
<dbReference type="KEGG" id="mmu:13629"/>
<dbReference type="UCSC" id="uc007gge.2">
    <property type="organism name" value="mouse"/>
</dbReference>
<dbReference type="AGR" id="MGI:95288"/>
<dbReference type="CTD" id="1938"/>
<dbReference type="MGI" id="MGI:95288">
    <property type="gene designation" value="Eef2"/>
</dbReference>
<dbReference type="VEuPathDB" id="HostDB:ENSMUSG00000034994"/>
<dbReference type="eggNOG" id="KOG0469">
    <property type="taxonomic scope" value="Eukaryota"/>
</dbReference>
<dbReference type="GeneTree" id="ENSGT00940000154662"/>
<dbReference type="HOGENOM" id="CLU_002794_11_1_1"/>
<dbReference type="InParanoid" id="P58252"/>
<dbReference type="OMA" id="ASWNTEN"/>
<dbReference type="OrthoDB" id="364892at2759"/>
<dbReference type="PhylomeDB" id="P58252"/>
<dbReference type="TreeFam" id="TF300575"/>
<dbReference type="Reactome" id="R-MMU-156902">
    <property type="pathway name" value="Peptide chain elongation"/>
</dbReference>
<dbReference type="Reactome" id="R-MMU-5358493">
    <property type="pathway name" value="Synthesis of diphthamide-EEF2"/>
</dbReference>
<dbReference type="Reactome" id="R-MMU-6798695">
    <property type="pathway name" value="Neutrophil degranulation"/>
</dbReference>
<dbReference type="Reactome" id="R-MMU-8876725">
    <property type="pathway name" value="Protein methylation"/>
</dbReference>
<dbReference type="BioGRID-ORCS" id="13629">
    <property type="hits" value="29 hits in 82 CRISPR screens"/>
</dbReference>
<dbReference type="CD-CODE" id="CE726F99">
    <property type="entry name" value="Postsynaptic density"/>
</dbReference>
<dbReference type="ChiTaRS" id="Eef2">
    <property type="organism name" value="mouse"/>
</dbReference>
<dbReference type="PRO" id="PR:P58252"/>
<dbReference type="Proteomes" id="UP000000589">
    <property type="component" value="Chromosome 10"/>
</dbReference>
<dbReference type="RNAct" id="P58252">
    <property type="molecule type" value="protein"/>
</dbReference>
<dbReference type="Bgee" id="ENSMUSG00000034994">
    <property type="expression patterns" value="Expressed in prostate gland ventral lobe and 262 other cell types or tissues"/>
</dbReference>
<dbReference type="GO" id="GO:0016235">
    <property type="term" value="C:aggresome"/>
    <property type="evidence" value="ECO:0007669"/>
    <property type="project" value="Ensembl"/>
</dbReference>
<dbReference type="GO" id="GO:0005737">
    <property type="term" value="C:cytoplasm"/>
    <property type="evidence" value="ECO:0000314"/>
    <property type="project" value="UniProtKB"/>
</dbReference>
<dbReference type="GO" id="GO:0005829">
    <property type="term" value="C:cytosol"/>
    <property type="evidence" value="ECO:0007669"/>
    <property type="project" value="Ensembl"/>
</dbReference>
<dbReference type="GO" id="GO:0098978">
    <property type="term" value="C:glutamatergic synapse"/>
    <property type="evidence" value="ECO:0007669"/>
    <property type="project" value="Ensembl"/>
</dbReference>
<dbReference type="GO" id="GO:0005886">
    <property type="term" value="C:plasma membrane"/>
    <property type="evidence" value="ECO:0007669"/>
    <property type="project" value="Ensembl"/>
</dbReference>
<dbReference type="GO" id="GO:0098794">
    <property type="term" value="C:postsynapse"/>
    <property type="evidence" value="ECO:0007669"/>
    <property type="project" value="GOC"/>
</dbReference>
<dbReference type="GO" id="GO:1990904">
    <property type="term" value="C:ribonucleoprotein complex"/>
    <property type="evidence" value="ECO:0000266"/>
    <property type="project" value="MGI"/>
</dbReference>
<dbReference type="GO" id="GO:0005840">
    <property type="term" value="C:ribosome"/>
    <property type="evidence" value="ECO:0000314"/>
    <property type="project" value="MGI"/>
</dbReference>
<dbReference type="GO" id="GO:0045202">
    <property type="term" value="C:synapse"/>
    <property type="evidence" value="ECO:0000314"/>
    <property type="project" value="SynGO"/>
</dbReference>
<dbReference type="GO" id="GO:0008097">
    <property type="term" value="F:5S rRNA binding"/>
    <property type="evidence" value="ECO:0007669"/>
    <property type="project" value="Ensembl"/>
</dbReference>
<dbReference type="GO" id="GO:0051015">
    <property type="term" value="F:actin filament binding"/>
    <property type="evidence" value="ECO:0007669"/>
    <property type="project" value="Ensembl"/>
</dbReference>
<dbReference type="GO" id="GO:0005525">
    <property type="term" value="F:GTP binding"/>
    <property type="evidence" value="ECO:0007669"/>
    <property type="project" value="UniProtKB-KW"/>
</dbReference>
<dbReference type="GO" id="GO:0003924">
    <property type="term" value="F:GTPase activity"/>
    <property type="evidence" value="ECO:0000314"/>
    <property type="project" value="MGI"/>
</dbReference>
<dbReference type="GO" id="GO:0106222">
    <property type="term" value="F:lncRNA binding"/>
    <property type="evidence" value="ECO:0000314"/>
    <property type="project" value="MGI"/>
</dbReference>
<dbReference type="GO" id="GO:0002039">
    <property type="term" value="F:p53 binding"/>
    <property type="evidence" value="ECO:0007669"/>
    <property type="project" value="Ensembl"/>
</dbReference>
<dbReference type="GO" id="GO:0019901">
    <property type="term" value="F:protein kinase binding"/>
    <property type="evidence" value="ECO:0007669"/>
    <property type="project" value="Ensembl"/>
</dbReference>
<dbReference type="GO" id="GO:0043022">
    <property type="term" value="F:ribosome binding"/>
    <property type="evidence" value="ECO:0007669"/>
    <property type="project" value="Ensembl"/>
</dbReference>
<dbReference type="GO" id="GO:0003746">
    <property type="term" value="F:translation elongation factor activity"/>
    <property type="evidence" value="ECO:0000250"/>
    <property type="project" value="UniProtKB"/>
</dbReference>
<dbReference type="GO" id="GO:1990416">
    <property type="term" value="P:cellular response to brain-derived neurotrophic factor stimulus"/>
    <property type="evidence" value="ECO:0007669"/>
    <property type="project" value="Ensembl"/>
</dbReference>
<dbReference type="GO" id="GO:0014009">
    <property type="term" value="P:glial cell proliferation"/>
    <property type="evidence" value="ECO:0007669"/>
    <property type="project" value="Ensembl"/>
</dbReference>
<dbReference type="GO" id="GO:0002244">
    <property type="term" value="P:hematopoietic progenitor cell differentiation"/>
    <property type="evidence" value="ECO:0000315"/>
    <property type="project" value="MGI"/>
</dbReference>
<dbReference type="GO" id="GO:2000767">
    <property type="term" value="P:positive regulation of cytoplasmic translation"/>
    <property type="evidence" value="ECO:0007669"/>
    <property type="project" value="Ensembl"/>
</dbReference>
<dbReference type="GO" id="GO:0034976">
    <property type="term" value="P:response to endoplasmic reticulum stress"/>
    <property type="evidence" value="ECO:0007669"/>
    <property type="project" value="Ensembl"/>
</dbReference>
<dbReference type="GO" id="GO:0032355">
    <property type="term" value="P:response to estradiol"/>
    <property type="evidence" value="ECO:0007669"/>
    <property type="project" value="Ensembl"/>
</dbReference>
<dbReference type="GO" id="GO:0045471">
    <property type="term" value="P:response to ethanol"/>
    <property type="evidence" value="ECO:0007669"/>
    <property type="project" value="Ensembl"/>
</dbReference>
<dbReference type="GO" id="GO:0051593">
    <property type="term" value="P:response to folic acid"/>
    <property type="evidence" value="ECO:0007669"/>
    <property type="project" value="Ensembl"/>
</dbReference>
<dbReference type="GO" id="GO:0042542">
    <property type="term" value="P:response to hydrogen peroxide"/>
    <property type="evidence" value="ECO:0007669"/>
    <property type="project" value="Ensembl"/>
</dbReference>
<dbReference type="GO" id="GO:0002931">
    <property type="term" value="P:response to ischemia"/>
    <property type="evidence" value="ECO:0007669"/>
    <property type="project" value="Ensembl"/>
</dbReference>
<dbReference type="GO" id="GO:0009410">
    <property type="term" value="P:response to xenobiotic stimulus"/>
    <property type="evidence" value="ECO:0007669"/>
    <property type="project" value="Ensembl"/>
</dbReference>
<dbReference type="GO" id="GO:0035914">
    <property type="term" value="P:skeletal muscle cell differentiation"/>
    <property type="evidence" value="ECO:0007669"/>
    <property type="project" value="Ensembl"/>
</dbReference>
<dbReference type="GO" id="GO:0003009">
    <property type="term" value="P:skeletal muscle contraction"/>
    <property type="evidence" value="ECO:0007669"/>
    <property type="project" value="Ensembl"/>
</dbReference>
<dbReference type="GO" id="GO:0140242">
    <property type="term" value="P:translation at postsynapse"/>
    <property type="evidence" value="ECO:0007669"/>
    <property type="project" value="Ensembl"/>
</dbReference>
<dbReference type="GO" id="GO:0006414">
    <property type="term" value="P:translational elongation"/>
    <property type="evidence" value="ECO:0000314"/>
    <property type="project" value="MGI"/>
</dbReference>
<dbReference type="CDD" id="cd01681">
    <property type="entry name" value="aeEF2_snRNP_like_IV"/>
    <property type="match status" value="1"/>
</dbReference>
<dbReference type="CDD" id="cd04096">
    <property type="entry name" value="eEF2_snRNP_like_C"/>
    <property type="match status" value="1"/>
</dbReference>
<dbReference type="CDD" id="cd01885">
    <property type="entry name" value="EF2"/>
    <property type="match status" value="1"/>
</dbReference>
<dbReference type="CDD" id="cd16261">
    <property type="entry name" value="EF2_snRNP_III"/>
    <property type="match status" value="1"/>
</dbReference>
<dbReference type="CDD" id="cd03700">
    <property type="entry name" value="EF2_snRNP_like_II"/>
    <property type="match status" value="1"/>
</dbReference>
<dbReference type="FunFam" id="2.40.30.10:FF:000010">
    <property type="entry name" value="Translation elongation factor 2"/>
    <property type="match status" value="1"/>
</dbReference>
<dbReference type="FunFam" id="3.30.230.10:FF:000006">
    <property type="entry name" value="Translation elongation factor 2"/>
    <property type="match status" value="1"/>
</dbReference>
<dbReference type="FunFam" id="3.30.70.240:FF:000003">
    <property type="entry name" value="Translation elongation factor 2"/>
    <property type="match status" value="1"/>
</dbReference>
<dbReference type="FunFam" id="3.30.70.870:FF:000002">
    <property type="entry name" value="Translation elongation factor 2"/>
    <property type="match status" value="1"/>
</dbReference>
<dbReference type="FunFam" id="3.40.50.300:FF:000058">
    <property type="entry name" value="Translation elongation factor 2"/>
    <property type="match status" value="1"/>
</dbReference>
<dbReference type="Gene3D" id="3.30.230.10">
    <property type="match status" value="1"/>
</dbReference>
<dbReference type="Gene3D" id="3.30.70.240">
    <property type="match status" value="1"/>
</dbReference>
<dbReference type="Gene3D" id="3.30.70.870">
    <property type="entry name" value="Elongation Factor G (Translational Gtpase), domain 3"/>
    <property type="match status" value="1"/>
</dbReference>
<dbReference type="Gene3D" id="3.40.50.300">
    <property type="entry name" value="P-loop containing nucleotide triphosphate hydrolases"/>
    <property type="match status" value="1"/>
</dbReference>
<dbReference type="Gene3D" id="2.40.30.10">
    <property type="entry name" value="Translation factors"/>
    <property type="match status" value="1"/>
</dbReference>
<dbReference type="InterPro" id="IPR041095">
    <property type="entry name" value="EFG_II"/>
</dbReference>
<dbReference type="InterPro" id="IPR035647">
    <property type="entry name" value="EFG_III/V"/>
</dbReference>
<dbReference type="InterPro" id="IPR000640">
    <property type="entry name" value="EFG_V-like"/>
</dbReference>
<dbReference type="InterPro" id="IPR004161">
    <property type="entry name" value="EFTu-like_2"/>
</dbReference>
<dbReference type="InterPro" id="IPR031157">
    <property type="entry name" value="G_TR_CS"/>
</dbReference>
<dbReference type="InterPro" id="IPR027417">
    <property type="entry name" value="P-loop_NTPase"/>
</dbReference>
<dbReference type="InterPro" id="IPR020568">
    <property type="entry name" value="Ribosomal_Su5_D2-typ_SF"/>
</dbReference>
<dbReference type="InterPro" id="IPR014721">
    <property type="entry name" value="Ribsml_uS5_D2-typ_fold_subgr"/>
</dbReference>
<dbReference type="InterPro" id="IPR005225">
    <property type="entry name" value="Small_GTP-bd"/>
</dbReference>
<dbReference type="InterPro" id="IPR000795">
    <property type="entry name" value="T_Tr_GTP-bd_dom"/>
</dbReference>
<dbReference type="InterPro" id="IPR009000">
    <property type="entry name" value="Transl_B-barrel_sf"/>
</dbReference>
<dbReference type="InterPro" id="IPR005517">
    <property type="entry name" value="Transl_elong_EFG/EF2_IV"/>
</dbReference>
<dbReference type="NCBIfam" id="TIGR00231">
    <property type="entry name" value="small_GTP"/>
    <property type="match status" value="1"/>
</dbReference>
<dbReference type="PANTHER" id="PTHR42908:SF35">
    <property type="entry name" value="ELONGATION FACTOR 2"/>
    <property type="match status" value="1"/>
</dbReference>
<dbReference type="PANTHER" id="PTHR42908">
    <property type="entry name" value="TRANSLATION ELONGATION FACTOR-RELATED"/>
    <property type="match status" value="1"/>
</dbReference>
<dbReference type="Pfam" id="PF00679">
    <property type="entry name" value="EFG_C"/>
    <property type="match status" value="1"/>
</dbReference>
<dbReference type="Pfam" id="PF14492">
    <property type="entry name" value="EFG_III"/>
    <property type="match status" value="1"/>
</dbReference>
<dbReference type="Pfam" id="PF03764">
    <property type="entry name" value="EFG_IV"/>
    <property type="match status" value="1"/>
</dbReference>
<dbReference type="Pfam" id="PF00009">
    <property type="entry name" value="GTP_EFTU"/>
    <property type="match status" value="1"/>
</dbReference>
<dbReference type="Pfam" id="PF03144">
    <property type="entry name" value="GTP_EFTU_D2"/>
    <property type="match status" value="1"/>
</dbReference>
<dbReference type="PRINTS" id="PR00315">
    <property type="entry name" value="ELONGATNFCT"/>
</dbReference>
<dbReference type="SMART" id="SM00838">
    <property type="entry name" value="EFG_C"/>
    <property type="match status" value="1"/>
</dbReference>
<dbReference type="SMART" id="SM00889">
    <property type="entry name" value="EFG_IV"/>
    <property type="match status" value="1"/>
</dbReference>
<dbReference type="SUPFAM" id="SSF54980">
    <property type="entry name" value="EF-G C-terminal domain-like"/>
    <property type="match status" value="2"/>
</dbReference>
<dbReference type="SUPFAM" id="SSF52540">
    <property type="entry name" value="P-loop containing nucleoside triphosphate hydrolases"/>
    <property type="match status" value="1"/>
</dbReference>
<dbReference type="SUPFAM" id="SSF54211">
    <property type="entry name" value="Ribosomal protein S5 domain 2-like"/>
    <property type="match status" value="1"/>
</dbReference>
<dbReference type="SUPFAM" id="SSF50447">
    <property type="entry name" value="Translation proteins"/>
    <property type="match status" value="1"/>
</dbReference>
<dbReference type="PROSITE" id="PS00301">
    <property type="entry name" value="G_TR_1"/>
    <property type="match status" value="1"/>
</dbReference>
<dbReference type="PROSITE" id="PS51722">
    <property type="entry name" value="G_TR_2"/>
    <property type="match status" value="1"/>
</dbReference>
<accession>P58252</accession>
<accession>Q544E4</accession>